<gene>
    <name evidence="1" type="primary">thiG</name>
    <name type="ordered locus">Saro_3290</name>
</gene>
<feature type="chain" id="PRO_0000236349" description="Thiazole synthase">
    <location>
        <begin position="1"/>
        <end position="259"/>
    </location>
</feature>
<feature type="active site" description="Schiff-base intermediate with DXP" evidence="1">
    <location>
        <position position="102"/>
    </location>
</feature>
<feature type="binding site" evidence="1">
    <location>
        <position position="163"/>
    </location>
    <ligand>
        <name>1-deoxy-D-xylulose 5-phosphate</name>
        <dbReference type="ChEBI" id="CHEBI:57792"/>
    </ligand>
</feature>
<feature type="binding site" evidence="1">
    <location>
        <begin position="189"/>
        <end position="190"/>
    </location>
    <ligand>
        <name>1-deoxy-D-xylulose 5-phosphate</name>
        <dbReference type="ChEBI" id="CHEBI:57792"/>
    </ligand>
</feature>
<feature type="binding site" evidence="1">
    <location>
        <begin position="211"/>
        <end position="212"/>
    </location>
    <ligand>
        <name>1-deoxy-D-xylulose 5-phosphate</name>
        <dbReference type="ChEBI" id="CHEBI:57792"/>
    </ligand>
</feature>
<keyword id="KW-0963">Cytoplasm</keyword>
<keyword id="KW-1185">Reference proteome</keyword>
<keyword id="KW-0704">Schiff base</keyword>
<keyword id="KW-0784">Thiamine biosynthesis</keyword>
<keyword id="KW-0808">Transferase</keyword>
<comment type="function">
    <text evidence="1">Catalyzes the rearrangement of 1-deoxy-D-xylulose 5-phosphate (DXP) to produce the thiazole phosphate moiety of thiamine. Sulfur is provided by the thiocarboxylate moiety of the carrier protein ThiS. In vitro, sulfur can be provided by H(2)S.</text>
</comment>
<comment type="catalytic activity">
    <reaction evidence="1">
        <text>[ThiS sulfur-carrier protein]-C-terminal-Gly-aminoethanethioate + 2-iminoacetate + 1-deoxy-D-xylulose 5-phosphate = [ThiS sulfur-carrier protein]-C-terminal Gly-Gly + 2-[(2R,5Z)-2-carboxy-4-methylthiazol-5(2H)-ylidene]ethyl phosphate + 2 H2O + H(+)</text>
        <dbReference type="Rhea" id="RHEA:26297"/>
        <dbReference type="Rhea" id="RHEA-COMP:12909"/>
        <dbReference type="Rhea" id="RHEA-COMP:19908"/>
        <dbReference type="ChEBI" id="CHEBI:15377"/>
        <dbReference type="ChEBI" id="CHEBI:15378"/>
        <dbReference type="ChEBI" id="CHEBI:57792"/>
        <dbReference type="ChEBI" id="CHEBI:62899"/>
        <dbReference type="ChEBI" id="CHEBI:77846"/>
        <dbReference type="ChEBI" id="CHEBI:90778"/>
        <dbReference type="ChEBI" id="CHEBI:232372"/>
        <dbReference type="EC" id="2.8.1.10"/>
    </reaction>
</comment>
<comment type="pathway">
    <text evidence="1">Cofactor biosynthesis; thiamine diphosphate biosynthesis.</text>
</comment>
<comment type="subunit">
    <text evidence="1">Homotetramer. Forms heterodimers with either ThiH or ThiS.</text>
</comment>
<comment type="subcellular location">
    <subcellularLocation>
        <location evidence="1">Cytoplasm</location>
    </subcellularLocation>
</comment>
<comment type="similarity">
    <text evidence="1">Belongs to the ThiG family.</text>
</comment>
<comment type="sequence caution" evidence="2">
    <conflict type="erroneous initiation">
        <sequence resource="EMBL-CDS" id="ABD27725"/>
    </conflict>
</comment>
<accession>Q2G348</accession>
<reference key="1">
    <citation type="submission" date="2006-01" db="EMBL/GenBank/DDBJ databases">
        <title>Complete sequence of Novosphingobium aromaticivorans DSM 12444.</title>
        <authorList>
            <consortium name="US DOE Joint Genome Institute"/>
            <person name="Copeland A."/>
            <person name="Lucas S."/>
            <person name="Lapidus A."/>
            <person name="Barry K."/>
            <person name="Detter J.C."/>
            <person name="Glavina T."/>
            <person name="Hammon N."/>
            <person name="Israni S."/>
            <person name="Pitluck S."/>
            <person name="Chain P."/>
            <person name="Malfatti S."/>
            <person name="Shin M."/>
            <person name="Vergez L."/>
            <person name="Schmutz J."/>
            <person name="Larimer F."/>
            <person name="Land M."/>
            <person name="Kyrpides N."/>
            <person name="Ivanova N."/>
            <person name="Fredrickson J."/>
            <person name="Balkwill D."/>
            <person name="Romine M.F."/>
            <person name="Richardson P."/>
        </authorList>
    </citation>
    <scope>NUCLEOTIDE SEQUENCE [LARGE SCALE GENOMIC DNA]</scope>
    <source>
        <strain>ATCC 700278 / DSM 12444 / CCUG 56034 / CIP 105152 / NBRC 16084 / F199</strain>
    </source>
</reference>
<proteinExistence type="inferred from homology"/>
<evidence type="ECO:0000255" key="1">
    <source>
        <dbReference type="HAMAP-Rule" id="MF_00443"/>
    </source>
</evidence>
<evidence type="ECO:0000305" key="2"/>
<dbReference type="EC" id="2.8.1.10" evidence="1"/>
<dbReference type="EMBL" id="CP000248">
    <property type="protein sequence ID" value="ABD27725.1"/>
    <property type="status" value="ALT_INIT"/>
    <property type="molecule type" value="Genomic_DNA"/>
</dbReference>
<dbReference type="SMR" id="Q2G348"/>
<dbReference type="STRING" id="279238.Saro_3290"/>
<dbReference type="KEGG" id="nar:Saro_3290"/>
<dbReference type="eggNOG" id="COG2022">
    <property type="taxonomic scope" value="Bacteria"/>
</dbReference>
<dbReference type="HOGENOM" id="CLU_062233_1_1_5"/>
<dbReference type="UniPathway" id="UPA00060"/>
<dbReference type="Proteomes" id="UP000009134">
    <property type="component" value="Chromosome"/>
</dbReference>
<dbReference type="GO" id="GO:0005737">
    <property type="term" value="C:cytoplasm"/>
    <property type="evidence" value="ECO:0007669"/>
    <property type="project" value="UniProtKB-SubCell"/>
</dbReference>
<dbReference type="GO" id="GO:1990107">
    <property type="term" value="F:thiazole synthase activity"/>
    <property type="evidence" value="ECO:0007669"/>
    <property type="project" value="UniProtKB-EC"/>
</dbReference>
<dbReference type="GO" id="GO:0009229">
    <property type="term" value="P:thiamine diphosphate biosynthetic process"/>
    <property type="evidence" value="ECO:0007669"/>
    <property type="project" value="UniProtKB-UniRule"/>
</dbReference>
<dbReference type="CDD" id="cd04728">
    <property type="entry name" value="ThiG"/>
    <property type="match status" value="1"/>
</dbReference>
<dbReference type="Gene3D" id="3.20.20.70">
    <property type="entry name" value="Aldolase class I"/>
    <property type="match status" value="1"/>
</dbReference>
<dbReference type="HAMAP" id="MF_00443">
    <property type="entry name" value="ThiG"/>
    <property type="match status" value="1"/>
</dbReference>
<dbReference type="InterPro" id="IPR013785">
    <property type="entry name" value="Aldolase_TIM"/>
</dbReference>
<dbReference type="InterPro" id="IPR033983">
    <property type="entry name" value="Thiazole_synthase_ThiG"/>
</dbReference>
<dbReference type="InterPro" id="IPR008867">
    <property type="entry name" value="ThiG"/>
</dbReference>
<dbReference type="PANTHER" id="PTHR34266">
    <property type="entry name" value="THIAZOLE SYNTHASE"/>
    <property type="match status" value="1"/>
</dbReference>
<dbReference type="PANTHER" id="PTHR34266:SF2">
    <property type="entry name" value="THIAZOLE SYNTHASE"/>
    <property type="match status" value="1"/>
</dbReference>
<dbReference type="Pfam" id="PF05690">
    <property type="entry name" value="ThiG"/>
    <property type="match status" value="1"/>
</dbReference>
<dbReference type="SUPFAM" id="SSF110399">
    <property type="entry name" value="ThiG-like"/>
    <property type="match status" value="1"/>
</dbReference>
<sequence length="259" mass="27425">MTDNNDTWTVAGRTFTSRLIVGTGKYKDFEQNAAAVEASGAEIVTVAVRRVNVSDPKAPMLTDYIDPKKITYLPNTAGCFTAEDAIRTLRLAREAGGWDLVKLEVLGEARTLYPNMIETIRATEVLAKEGFLPMVYCVDDPIAAKQLEDAGAVAVMPLGAPIGSGLGIQNKVTVRLIVEGAKVPVLVDAGVGTASEAAVAMELGCDGVLMNTAIAEAKDPIRMARAMKLAVQAGRDAYLAGRMPTRKYADPSSPLAGLI</sequence>
<protein>
    <recommendedName>
        <fullName evidence="1">Thiazole synthase</fullName>
        <ecNumber evidence="1">2.8.1.10</ecNumber>
    </recommendedName>
</protein>
<name>THIG_NOVAD</name>
<organism>
    <name type="scientific">Novosphingobium aromaticivorans (strain ATCC 700278 / DSM 12444 / CCUG 56034 / CIP 105152 / NBRC 16084 / F199)</name>
    <dbReference type="NCBI Taxonomy" id="279238"/>
    <lineage>
        <taxon>Bacteria</taxon>
        <taxon>Pseudomonadati</taxon>
        <taxon>Pseudomonadota</taxon>
        <taxon>Alphaproteobacteria</taxon>
        <taxon>Sphingomonadales</taxon>
        <taxon>Sphingomonadaceae</taxon>
        <taxon>Novosphingobium</taxon>
    </lineage>
</organism>